<organism>
    <name type="scientific">Lysinibacillus sphaericus (strain C3-41)</name>
    <dbReference type="NCBI Taxonomy" id="444177"/>
    <lineage>
        <taxon>Bacteria</taxon>
        <taxon>Bacillati</taxon>
        <taxon>Bacillota</taxon>
        <taxon>Bacilli</taxon>
        <taxon>Bacillales</taxon>
        <taxon>Bacillaceae</taxon>
        <taxon>Lysinibacillus</taxon>
    </lineage>
</organism>
<reference key="1">
    <citation type="journal article" date="2008" name="J. Bacteriol.">
        <title>Complete genome sequence of the mosquitocidal bacterium Bacillus sphaericus C3-41 and comparison with those of closely related Bacillus species.</title>
        <authorList>
            <person name="Hu X."/>
            <person name="Fan W."/>
            <person name="Han B."/>
            <person name="Liu H."/>
            <person name="Zheng D."/>
            <person name="Li Q."/>
            <person name="Dong W."/>
            <person name="Yan J."/>
            <person name="Gao M."/>
            <person name="Berry C."/>
            <person name="Yuan Z."/>
        </authorList>
    </citation>
    <scope>NUCLEOTIDE SEQUENCE [LARGE SCALE GENOMIC DNA]</scope>
    <source>
        <strain>C3-41</strain>
    </source>
</reference>
<proteinExistence type="inferred from homology"/>
<name>RPOC_LYSSC</name>
<feature type="chain" id="PRO_0000353389" description="DNA-directed RNA polymerase subunit beta'">
    <location>
        <begin position="1"/>
        <end position="1227"/>
    </location>
</feature>
<feature type="binding site" evidence="1">
    <location>
        <position position="60"/>
    </location>
    <ligand>
        <name>Zn(2+)</name>
        <dbReference type="ChEBI" id="CHEBI:29105"/>
        <label>1</label>
    </ligand>
</feature>
<feature type="binding site" evidence="1">
    <location>
        <position position="62"/>
    </location>
    <ligand>
        <name>Zn(2+)</name>
        <dbReference type="ChEBI" id="CHEBI:29105"/>
        <label>1</label>
    </ligand>
</feature>
<feature type="binding site" evidence="1">
    <location>
        <position position="75"/>
    </location>
    <ligand>
        <name>Zn(2+)</name>
        <dbReference type="ChEBI" id="CHEBI:29105"/>
        <label>1</label>
    </ligand>
</feature>
<feature type="binding site" evidence="1">
    <location>
        <position position="78"/>
    </location>
    <ligand>
        <name>Zn(2+)</name>
        <dbReference type="ChEBI" id="CHEBI:29105"/>
        <label>1</label>
    </ligand>
</feature>
<feature type="binding site" evidence="1">
    <location>
        <position position="449"/>
    </location>
    <ligand>
        <name>Mg(2+)</name>
        <dbReference type="ChEBI" id="CHEBI:18420"/>
    </ligand>
</feature>
<feature type="binding site" evidence="1">
    <location>
        <position position="451"/>
    </location>
    <ligand>
        <name>Mg(2+)</name>
        <dbReference type="ChEBI" id="CHEBI:18420"/>
    </ligand>
</feature>
<feature type="binding site" evidence="1">
    <location>
        <position position="453"/>
    </location>
    <ligand>
        <name>Mg(2+)</name>
        <dbReference type="ChEBI" id="CHEBI:18420"/>
    </ligand>
</feature>
<feature type="binding site" evidence="1">
    <location>
        <position position="847"/>
    </location>
    <ligand>
        <name>Zn(2+)</name>
        <dbReference type="ChEBI" id="CHEBI:29105"/>
        <label>2</label>
    </ligand>
</feature>
<feature type="binding site" evidence="1">
    <location>
        <position position="921"/>
    </location>
    <ligand>
        <name>Zn(2+)</name>
        <dbReference type="ChEBI" id="CHEBI:29105"/>
        <label>2</label>
    </ligand>
</feature>
<feature type="binding site" evidence="1">
    <location>
        <position position="928"/>
    </location>
    <ligand>
        <name>Zn(2+)</name>
        <dbReference type="ChEBI" id="CHEBI:29105"/>
        <label>2</label>
    </ligand>
</feature>
<feature type="binding site" evidence="1">
    <location>
        <position position="931"/>
    </location>
    <ligand>
        <name>Zn(2+)</name>
        <dbReference type="ChEBI" id="CHEBI:29105"/>
        <label>2</label>
    </ligand>
</feature>
<protein>
    <recommendedName>
        <fullName evidence="1">DNA-directed RNA polymerase subunit beta'</fullName>
        <shortName evidence="1">RNAP subunit beta'</shortName>
        <ecNumber evidence="1">2.7.7.6</ecNumber>
    </recommendedName>
    <alternativeName>
        <fullName evidence="1">RNA polymerase subunit beta'</fullName>
    </alternativeName>
    <alternativeName>
        <fullName evidence="1">Transcriptase subunit beta'</fullName>
    </alternativeName>
</protein>
<keyword id="KW-0240">DNA-directed RNA polymerase</keyword>
<keyword id="KW-0460">Magnesium</keyword>
<keyword id="KW-0479">Metal-binding</keyword>
<keyword id="KW-0548">Nucleotidyltransferase</keyword>
<keyword id="KW-0804">Transcription</keyword>
<keyword id="KW-0808">Transferase</keyword>
<keyword id="KW-0862">Zinc</keyword>
<accession>B1HMZ5</accession>
<gene>
    <name evidence="1" type="primary">rpoC</name>
    <name type="ordered locus">Bsph_4629</name>
</gene>
<comment type="function">
    <text evidence="1">DNA-dependent RNA polymerase catalyzes the transcription of DNA into RNA using the four ribonucleoside triphosphates as substrates.</text>
</comment>
<comment type="catalytic activity">
    <reaction evidence="1">
        <text>RNA(n) + a ribonucleoside 5'-triphosphate = RNA(n+1) + diphosphate</text>
        <dbReference type="Rhea" id="RHEA:21248"/>
        <dbReference type="Rhea" id="RHEA-COMP:14527"/>
        <dbReference type="Rhea" id="RHEA-COMP:17342"/>
        <dbReference type="ChEBI" id="CHEBI:33019"/>
        <dbReference type="ChEBI" id="CHEBI:61557"/>
        <dbReference type="ChEBI" id="CHEBI:140395"/>
        <dbReference type="EC" id="2.7.7.6"/>
    </reaction>
</comment>
<comment type="cofactor">
    <cofactor evidence="1">
        <name>Mg(2+)</name>
        <dbReference type="ChEBI" id="CHEBI:18420"/>
    </cofactor>
    <text evidence="1">Binds 1 Mg(2+) ion per subunit.</text>
</comment>
<comment type="cofactor">
    <cofactor evidence="1">
        <name>Zn(2+)</name>
        <dbReference type="ChEBI" id="CHEBI:29105"/>
    </cofactor>
    <text evidence="1">Binds 2 Zn(2+) ions per subunit.</text>
</comment>
<comment type="subunit">
    <text evidence="1">The RNAP catalytic core consists of 2 alpha, 1 beta, 1 beta' and 1 omega subunit. When a sigma factor is associated with the core the holoenzyme is formed, which can initiate transcription.</text>
</comment>
<comment type="similarity">
    <text evidence="1">Belongs to the RNA polymerase beta' chain family.</text>
</comment>
<comment type="sequence caution" evidence="2">
    <conflict type="erroneous initiation">
        <sequence resource="EMBL-CDS" id="ACA42073"/>
    </conflict>
    <text>Truncated N-terminus.</text>
</comment>
<dbReference type="EC" id="2.7.7.6" evidence="1"/>
<dbReference type="EMBL" id="CP000817">
    <property type="protein sequence ID" value="ACA42073.1"/>
    <property type="status" value="ALT_INIT"/>
    <property type="molecule type" value="Genomic_DNA"/>
</dbReference>
<dbReference type="RefSeq" id="WP_031416724.1">
    <property type="nucleotide sequence ID" value="NC_010382.1"/>
</dbReference>
<dbReference type="SMR" id="B1HMZ5"/>
<dbReference type="EnsemblBacteria" id="ACA42073">
    <property type="protein sequence ID" value="ACA42073"/>
    <property type="gene ID" value="Bsph_4629"/>
</dbReference>
<dbReference type="KEGG" id="lsp:Bsph_4629"/>
<dbReference type="HOGENOM" id="CLU_000524_3_0_9"/>
<dbReference type="Proteomes" id="UP000002164">
    <property type="component" value="Chromosome"/>
</dbReference>
<dbReference type="GO" id="GO:0000428">
    <property type="term" value="C:DNA-directed RNA polymerase complex"/>
    <property type="evidence" value="ECO:0007669"/>
    <property type="project" value="UniProtKB-KW"/>
</dbReference>
<dbReference type="GO" id="GO:0003677">
    <property type="term" value="F:DNA binding"/>
    <property type="evidence" value="ECO:0007669"/>
    <property type="project" value="UniProtKB-UniRule"/>
</dbReference>
<dbReference type="GO" id="GO:0003899">
    <property type="term" value="F:DNA-directed RNA polymerase activity"/>
    <property type="evidence" value="ECO:0007669"/>
    <property type="project" value="UniProtKB-UniRule"/>
</dbReference>
<dbReference type="GO" id="GO:0000287">
    <property type="term" value="F:magnesium ion binding"/>
    <property type="evidence" value="ECO:0007669"/>
    <property type="project" value="UniProtKB-UniRule"/>
</dbReference>
<dbReference type="GO" id="GO:0008270">
    <property type="term" value="F:zinc ion binding"/>
    <property type="evidence" value="ECO:0007669"/>
    <property type="project" value="UniProtKB-UniRule"/>
</dbReference>
<dbReference type="GO" id="GO:0006351">
    <property type="term" value="P:DNA-templated transcription"/>
    <property type="evidence" value="ECO:0007669"/>
    <property type="project" value="UniProtKB-UniRule"/>
</dbReference>
<dbReference type="CDD" id="cd02655">
    <property type="entry name" value="RNAP_beta'_C"/>
    <property type="match status" value="1"/>
</dbReference>
<dbReference type="CDD" id="cd01609">
    <property type="entry name" value="RNAP_beta'_N"/>
    <property type="match status" value="1"/>
</dbReference>
<dbReference type="FunFam" id="1.10.150.390:FF:000002">
    <property type="entry name" value="DNA-directed RNA polymerase subunit beta"/>
    <property type="match status" value="1"/>
</dbReference>
<dbReference type="FunFam" id="4.10.860.120:FF:000001">
    <property type="entry name" value="DNA-directed RNA polymerase subunit beta"/>
    <property type="match status" value="1"/>
</dbReference>
<dbReference type="Gene3D" id="1.10.132.30">
    <property type="match status" value="1"/>
</dbReference>
<dbReference type="Gene3D" id="1.10.150.390">
    <property type="match status" value="1"/>
</dbReference>
<dbReference type="Gene3D" id="1.10.1790.20">
    <property type="match status" value="1"/>
</dbReference>
<dbReference type="Gene3D" id="1.10.40.90">
    <property type="match status" value="1"/>
</dbReference>
<dbReference type="Gene3D" id="2.40.40.20">
    <property type="match status" value="1"/>
</dbReference>
<dbReference type="Gene3D" id="2.40.50.100">
    <property type="match status" value="1"/>
</dbReference>
<dbReference type="Gene3D" id="4.10.860.120">
    <property type="entry name" value="RNA polymerase II, clamp domain"/>
    <property type="match status" value="1"/>
</dbReference>
<dbReference type="Gene3D" id="1.10.274.100">
    <property type="entry name" value="RNA polymerase Rpb1, domain 3"/>
    <property type="match status" value="1"/>
</dbReference>
<dbReference type="HAMAP" id="MF_01322">
    <property type="entry name" value="RNApol_bact_RpoC"/>
    <property type="match status" value="1"/>
</dbReference>
<dbReference type="InterPro" id="IPR045867">
    <property type="entry name" value="DNA-dir_RpoC_beta_prime"/>
</dbReference>
<dbReference type="InterPro" id="IPR012754">
    <property type="entry name" value="DNA-dir_RpoC_beta_prime_bact"/>
</dbReference>
<dbReference type="InterPro" id="IPR000722">
    <property type="entry name" value="RNA_pol_asu"/>
</dbReference>
<dbReference type="InterPro" id="IPR006592">
    <property type="entry name" value="RNA_pol_N"/>
</dbReference>
<dbReference type="InterPro" id="IPR007080">
    <property type="entry name" value="RNA_pol_Rpb1_1"/>
</dbReference>
<dbReference type="InterPro" id="IPR007066">
    <property type="entry name" value="RNA_pol_Rpb1_3"/>
</dbReference>
<dbReference type="InterPro" id="IPR042102">
    <property type="entry name" value="RNA_pol_Rpb1_3_sf"/>
</dbReference>
<dbReference type="InterPro" id="IPR007083">
    <property type="entry name" value="RNA_pol_Rpb1_4"/>
</dbReference>
<dbReference type="InterPro" id="IPR007081">
    <property type="entry name" value="RNA_pol_Rpb1_5"/>
</dbReference>
<dbReference type="InterPro" id="IPR044893">
    <property type="entry name" value="RNA_pol_Rpb1_clamp_domain"/>
</dbReference>
<dbReference type="InterPro" id="IPR038120">
    <property type="entry name" value="Rpb1_funnel_sf"/>
</dbReference>
<dbReference type="NCBIfam" id="TIGR02386">
    <property type="entry name" value="rpoC_TIGR"/>
    <property type="match status" value="1"/>
</dbReference>
<dbReference type="PANTHER" id="PTHR19376">
    <property type="entry name" value="DNA-DIRECTED RNA POLYMERASE"/>
    <property type="match status" value="1"/>
</dbReference>
<dbReference type="PANTHER" id="PTHR19376:SF54">
    <property type="entry name" value="DNA-DIRECTED RNA POLYMERASE SUBUNIT BETA"/>
    <property type="match status" value="1"/>
</dbReference>
<dbReference type="Pfam" id="PF04997">
    <property type="entry name" value="RNA_pol_Rpb1_1"/>
    <property type="match status" value="1"/>
</dbReference>
<dbReference type="Pfam" id="PF00623">
    <property type="entry name" value="RNA_pol_Rpb1_2"/>
    <property type="match status" value="1"/>
</dbReference>
<dbReference type="Pfam" id="PF04983">
    <property type="entry name" value="RNA_pol_Rpb1_3"/>
    <property type="match status" value="1"/>
</dbReference>
<dbReference type="Pfam" id="PF05000">
    <property type="entry name" value="RNA_pol_Rpb1_4"/>
    <property type="match status" value="1"/>
</dbReference>
<dbReference type="Pfam" id="PF04998">
    <property type="entry name" value="RNA_pol_Rpb1_5"/>
    <property type="match status" value="1"/>
</dbReference>
<dbReference type="SMART" id="SM00663">
    <property type="entry name" value="RPOLA_N"/>
    <property type="match status" value="1"/>
</dbReference>
<dbReference type="SUPFAM" id="SSF64484">
    <property type="entry name" value="beta and beta-prime subunits of DNA dependent RNA-polymerase"/>
    <property type="match status" value="1"/>
</dbReference>
<sequence length="1227" mass="137294">MIDVNEFEYMKIGLASPDKIRSWSYGEVKKPETINYRTLKPEKDGLFCERIFGPTKDWECHCGKYKRVRYKGVVCDRCGVEVTRAKVRRERMGHIELAAPVSHIWYFKGIPSRMGLILDMSPRALEEVIYFASYVVIDAGATNLESKQLLSEKEYRAYREKFGNTFEASMGAEAIKKLLGKIDLEDETHSLKEELKSAQGQRRTRAIKRLEVVESFRNSGNSPEWMILDVLPVIPPELRPMVQLDGGRFATSDLNDLYRRVINRNNRLKRLLDLGAPSIIVQNEKRMLQEAVDALIDNGRRGRPVTGPGNRPLKSLSHMLKGKQGRFRQNLLGKRVDYSGRSVIVVGPNLKMYQCGLPKEMAIELFKPFVMKELVERGLAHNIKSAKRKIERLNNDVWDVLEDVIREHPVLLNRAPTLHRLGIQAFEPTLVEGRAIRLHPLVCTAYNADFDGDQMAVHVPLSAEAQAEARLLMLAAQNILNPKDGKPVVTPSQDMVLGNYYLTLERESARGEGTIFYGPNEVLIAYDTGHVHLHTRIAIKAGSLNNPTFTEEQNNMFLLTTVGKVIFNEILPESFPYINEPTDFNLEQVTPEKYFVNLTIDEETLKELESDSAYNSLDEKGKIDAQRTAVLRKHFESVPVVNPFRKKFLGNIIAEVFKRFHITETSKMLDRMKNLGFKYSTRAGITVGVSDIVVLPDKGEILAVAQEKVDKVQAQFRRGFITEDERYDRVISSWSAAKDEIQAKLMKSLEKTNPIFMMSDSGARGNASNFTQLAGMRGLMANPAGRIIELPIKSSFREGLTVLEYFISTHGARKGLADTALKTADSGYLTRRLVDVAQDVIVREDDCGTDRGLTIGALMEGTELIEALDERIVGRHTKKTIVHPETGEVILNKDGLIDQDVARAIIEAGIEEVTIRSAFTCNTKHGVCKKCYGMNLATGEKVEVGEAVGIIAAQSIGEPGTQLTMRTFHTGGVAGDDITQGLPRIQEIFEARNPKGQSVISEIAGTVSDITEIREGLKEITIQGDVETRKYQAPYNARLKVIEGDNVERGQVLTEGSIDPKQLLKVKDVSTVQEYLLKEVQKVYRMQGVEIGDKHIEVMVRQMLRKVRVIEAGDTDLLPGSLLDIHQFAEANADAVMDGKNPATCRPVILGITKASLETESFLSAASFQETTRVLTDAAIKGKRDELLGLKENVIIGKLVPAGTGMQRYRQIRIEKDELDTEVVSAE</sequence>
<evidence type="ECO:0000255" key="1">
    <source>
        <dbReference type="HAMAP-Rule" id="MF_01322"/>
    </source>
</evidence>
<evidence type="ECO:0000305" key="2"/>